<evidence type="ECO:0000255" key="1">
    <source>
        <dbReference type="HAMAP-Rule" id="MF_00226"/>
    </source>
</evidence>
<accession>Q3B1F7</accession>
<sequence length="431" mass="44977">MSERVPSIRAEIVSVGDELLKGQRVNTNASFIARSLGSVGIPVVRVTACSDFESEMASVFREALGRADVVLVTGGLGPTRDDRTRKAAGELLGLGLRLDPDALREVERRVTAHGRTMSELMQGQAMVLDGSRAIPNTRGTAAGMIIPAGERFGGSHLVLMPGVPVEMEAMMELTVQPWLRGLSDTTIIHTPVKTTGIGESTLADMLPDIEDSLPEGTSLAYLPHGAGVDLMVSTIARDPLRAERDNAAVVEAIRERAAAFIFAVGTASLEETIIGMLASGGLTLSVAESCTGGLIASRLTDVPGSSVSLMQGFIVYSNSAKEELLGVSRGLIDTHGAVSEEVACAMALGCLRRSGTSIALATTGIAGPGGGSPEKPVGTLCLAIARQVPGSGPSVGVRTLHMHGDRLQNKHRFSEAALRDLWVALRGEQGG</sequence>
<gene>
    <name type="ordered locus">Plut_1982</name>
</gene>
<protein>
    <recommendedName>
        <fullName evidence="1">CinA-like protein</fullName>
    </recommendedName>
</protein>
<dbReference type="EMBL" id="CP000096">
    <property type="protein sequence ID" value="ABB24824.1"/>
    <property type="molecule type" value="Genomic_DNA"/>
</dbReference>
<dbReference type="RefSeq" id="WP_011358694.1">
    <property type="nucleotide sequence ID" value="NC_007512.1"/>
</dbReference>
<dbReference type="SMR" id="Q3B1F7"/>
<dbReference type="STRING" id="319225.Plut_1982"/>
<dbReference type="KEGG" id="plt:Plut_1982"/>
<dbReference type="eggNOG" id="COG1058">
    <property type="taxonomic scope" value="Bacteria"/>
</dbReference>
<dbReference type="eggNOG" id="COG1546">
    <property type="taxonomic scope" value="Bacteria"/>
</dbReference>
<dbReference type="HOGENOM" id="CLU_030805_9_3_10"/>
<dbReference type="OrthoDB" id="9801454at2"/>
<dbReference type="Proteomes" id="UP000002709">
    <property type="component" value="Chromosome"/>
</dbReference>
<dbReference type="CDD" id="cd00885">
    <property type="entry name" value="cinA"/>
    <property type="match status" value="1"/>
</dbReference>
<dbReference type="Gene3D" id="3.30.70.2860">
    <property type="match status" value="1"/>
</dbReference>
<dbReference type="Gene3D" id="3.90.950.20">
    <property type="entry name" value="CinA-like"/>
    <property type="match status" value="1"/>
</dbReference>
<dbReference type="Gene3D" id="3.40.980.10">
    <property type="entry name" value="MoaB/Mog-like domain"/>
    <property type="match status" value="1"/>
</dbReference>
<dbReference type="HAMAP" id="MF_00226_B">
    <property type="entry name" value="CinA_B"/>
    <property type="match status" value="1"/>
</dbReference>
<dbReference type="InterPro" id="IPR050101">
    <property type="entry name" value="CinA"/>
</dbReference>
<dbReference type="InterPro" id="IPR036653">
    <property type="entry name" value="CinA-like_C"/>
</dbReference>
<dbReference type="InterPro" id="IPR008136">
    <property type="entry name" value="CinA_C"/>
</dbReference>
<dbReference type="InterPro" id="IPR041424">
    <property type="entry name" value="CinA_KH"/>
</dbReference>
<dbReference type="InterPro" id="IPR008135">
    <property type="entry name" value="Competence-induced_CinA"/>
</dbReference>
<dbReference type="InterPro" id="IPR036425">
    <property type="entry name" value="MoaB/Mog-like_dom_sf"/>
</dbReference>
<dbReference type="InterPro" id="IPR001453">
    <property type="entry name" value="MoaB/Mog_dom"/>
</dbReference>
<dbReference type="NCBIfam" id="TIGR00200">
    <property type="entry name" value="cinA_nterm"/>
    <property type="match status" value="1"/>
</dbReference>
<dbReference type="NCBIfam" id="TIGR00199">
    <property type="entry name" value="PncC_domain"/>
    <property type="match status" value="1"/>
</dbReference>
<dbReference type="PANTHER" id="PTHR13939">
    <property type="entry name" value="NICOTINAMIDE-NUCLEOTIDE AMIDOHYDROLASE PNCC"/>
    <property type="match status" value="1"/>
</dbReference>
<dbReference type="PANTHER" id="PTHR13939:SF0">
    <property type="entry name" value="NMN AMIDOHYDROLASE-LIKE PROTEIN YFAY"/>
    <property type="match status" value="1"/>
</dbReference>
<dbReference type="Pfam" id="PF02464">
    <property type="entry name" value="CinA"/>
    <property type="match status" value="1"/>
</dbReference>
<dbReference type="Pfam" id="PF18146">
    <property type="entry name" value="CinA_KH"/>
    <property type="match status" value="1"/>
</dbReference>
<dbReference type="Pfam" id="PF00994">
    <property type="entry name" value="MoCF_biosynth"/>
    <property type="match status" value="1"/>
</dbReference>
<dbReference type="PIRSF" id="PIRSF006728">
    <property type="entry name" value="CinA"/>
    <property type="match status" value="1"/>
</dbReference>
<dbReference type="SMART" id="SM00852">
    <property type="entry name" value="MoCF_biosynth"/>
    <property type="match status" value="1"/>
</dbReference>
<dbReference type="SUPFAM" id="SSF142433">
    <property type="entry name" value="CinA-like"/>
    <property type="match status" value="1"/>
</dbReference>
<dbReference type="SUPFAM" id="SSF53218">
    <property type="entry name" value="Molybdenum cofactor biosynthesis proteins"/>
    <property type="match status" value="1"/>
</dbReference>
<proteinExistence type="inferred from homology"/>
<comment type="similarity">
    <text evidence="1">Belongs to the CinA family.</text>
</comment>
<feature type="chain" id="PRO_0000336515" description="CinA-like protein">
    <location>
        <begin position="1"/>
        <end position="431"/>
    </location>
</feature>
<reference key="1">
    <citation type="submission" date="2005-08" db="EMBL/GenBank/DDBJ databases">
        <title>Complete sequence of Pelodictyon luteolum DSM 273.</title>
        <authorList>
            <consortium name="US DOE Joint Genome Institute"/>
            <person name="Copeland A."/>
            <person name="Lucas S."/>
            <person name="Lapidus A."/>
            <person name="Barry K."/>
            <person name="Detter J.C."/>
            <person name="Glavina T."/>
            <person name="Hammon N."/>
            <person name="Israni S."/>
            <person name="Pitluck S."/>
            <person name="Bryant D."/>
            <person name="Schmutz J."/>
            <person name="Larimer F."/>
            <person name="Land M."/>
            <person name="Kyrpides N."/>
            <person name="Ivanova N."/>
            <person name="Richardson P."/>
        </authorList>
    </citation>
    <scope>NUCLEOTIDE SEQUENCE [LARGE SCALE GENOMIC DNA]</scope>
    <source>
        <strain>DSM 273 / BCRC 81028 / 2530</strain>
    </source>
</reference>
<name>CINAL_CHLL3</name>
<keyword id="KW-1185">Reference proteome</keyword>
<organism>
    <name type="scientific">Chlorobium luteolum (strain DSM 273 / BCRC 81028 / 2530)</name>
    <name type="common">Pelodictyon luteolum</name>
    <dbReference type="NCBI Taxonomy" id="319225"/>
    <lineage>
        <taxon>Bacteria</taxon>
        <taxon>Pseudomonadati</taxon>
        <taxon>Chlorobiota</taxon>
        <taxon>Chlorobiia</taxon>
        <taxon>Chlorobiales</taxon>
        <taxon>Chlorobiaceae</taxon>
        <taxon>Chlorobium/Pelodictyon group</taxon>
        <taxon>Pelodictyon</taxon>
    </lineage>
</organism>